<evidence type="ECO:0000255" key="1"/>
<evidence type="ECO:0000255" key="2">
    <source>
        <dbReference type="PROSITE-ProRule" id="PRU00521"/>
    </source>
</evidence>
<evidence type="ECO:0000269" key="3">
    <source>
    </source>
</evidence>
<evidence type="ECO:0000269" key="4">
    <source>
    </source>
</evidence>
<evidence type="ECO:0000269" key="5">
    <source>
    </source>
</evidence>
<evidence type="ECO:0000269" key="6">
    <source>
    </source>
</evidence>
<evidence type="ECO:0000303" key="7">
    <source>
    </source>
</evidence>
<evidence type="ECO:0000305" key="8"/>
<evidence type="ECO:0000312" key="9">
    <source>
        <dbReference type="Proteomes" id="UP000000437"/>
    </source>
</evidence>
<evidence type="ECO:0000312" key="10">
    <source>
        <dbReference type="ZFIN" id="ZDB-GENE-130603-37"/>
    </source>
</evidence>
<sequence>MNASQQIHVFSSHWKVESVIISLIFSMIFLVGTVGNCLVLAVLIRNGQMNTKSTNLFILNLGLADLCFIVFCVPLQATIYTMDEWVFGAFVCKAVHFIIYLTMYASIFTLAAVSLDRYLAIRYPLRSRETRTPRNALTSISLVWALSLFFSSPYLSYYQQMDLDGTTVCIPAWSVHHRQAMDICTFIFGYLIPVLILGITYARTIRYLWTSVDPMQDMSESRKAKRKVTKMIIIVAVLFCLCWLPHHLVILCMWFGHFPLNHTTYVLRILSHLVAYANSCLNPIVYALVSKHFRKGFKKVFGCAFRNRVVNRIHTVQPAQTVSLMEAASSEGSNHCDGSTRGRLWSKSSKKMMTSAFMTFNVT</sequence>
<organism evidence="9">
    <name type="scientific">Danio rerio</name>
    <name type="common">Zebrafish</name>
    <name type="synonym">Brachydanio rerio</name>
    <dbReference type="NCBI Taxonomy" id="7955"/>
    <lineage>
        <taxon>Eukaryota</taxon>
        <taxon>Metazoa</taxon>
        <taxon>Chordata</taxon>
        <taxon>Craniata</taxon>
        <taxon>Vertebrata</taxon>
        <taxon>Euteleostomi</taxon>
        <taxon>Actinopterygii</taxon>
        <taxon>Neopterygii</taxon>
        <taxon>Teleostei</taxon>
        <taxon>Ostariophysi</taxon>
        <taxon>Cypriniformes</taxon>
        <taxon>Danionidae</taxon>
        <taxon>Danioninae</taxon>
        <taxon>Danio</taxon>
    </lineage>
</organism>
<reference evidence="9" key="1">
    <citation type="journal article" date="2013" name="Nature">
        <title>The zebrafish reference genome sequence and its relationship to the human genome.</title>
        <authorList>
            <person name="Howe K."/>
            <person name="Clark M.D."/>
            <person name="Torroja C.F."/>
            <person name="Torrance J."/>
            <person name="Berthelot C."/>
            <person name="Muffato M."/>
            <person name="Collins J.E."/>
            <person name="Humphray S."/>
            <person name="McLaren K."/>
            <person name="Matthews L."/>
            <person name="McLaren S."/>
            <person name="Sealy I."/>
            <person name="Caccamo M."/>
            <person name="Churcher C."/>
            <person name="Scott C."/>
            <person name="Barrett J.C."/>
            <person name="Koch R."/>
            <person name="Rauch G.J."/>
            <person name="White S."/>
            <person name="Chow W."/>
            <person name="Kilian B."/>
            <person name="Quintais L.T."/>
            <person name="Guerra-Assuncao J.A."/>
            <person name="Zhou Y."/>
            <person name="Gu Y."/>
            <person name="Yen J."/>
            <person name="Vogel J.H."/>
            <person name="Eyre T."/>
            <person name="Redmond S."/>
            <person name="Banerjee R."/>
            <person name="Chi J."/>
            <person name="Fu B."/>
            <person name="Langley E."/>
            <person name="Maguire S.F."/>
            <person name="Laird G.K."/>
            <person name="Lloyd D."/>
            <person name="Kenyon E."/>
            <person name="Donaldson S."/>
            <person name="Sehra H."/>
            <person name="Almeida-King J."/>
            <person name="Loveland J."/>
            <person name="Trevanion S."/>
            <person name="Jones M."/>
            <person name="Quail M."/>
            <person name="Willey D."/>
            <person name="Hunt A."/>
            <person name="Burton J."/>
            <person name="Sims S."/>
            <person name="McLay K."/>
            <person name="Plumb B."/>
            <person name="Davis J."/>
            <person name="Clee C."/>
            <person name="Oliver K."/>
            <person name="Clark R."/>
            <person name="Riddle C."/>
            <person name="Elliot D."/>
            <person name="Threadgold G."/>
            <person name="Harden G."/>
            <person name="Ware D."/>
            <person name="Begum S."/>
            <person name="Mortimore B."/>
            <person name="Kerry G."/>
            <person name="Heath P."/>
            <person name="Phillimore B."/>
            <person name="Tracey A."/>
            <person name="Corby N."/>
            <person name="Dunn M."/>
            <person name="Johnson C."/>
            <person name="Wood J."/>
            <person name="Clark S."/>
            <person name="Pelan S."/>
            <person name="Griffiths G."/>
            <person name="Smith M."/>
            <person name="Glithero R."/>
            <person name="Howden P."/>
            <person name="Barker N."/>
            <person name="Lloyd C."/>
            <person name="Stevens C."/>
            <person name="Harley J."/>
            <person name="Holt K."/>
            <person name="Panagiotidis G."/>
            <person name="Lovell J."/>
            <person name="Beasley H."/>
            <person name="Henderson C."/>
            <person name="Gordon D."/>
            <person name="Auger K."/>
            <person name="Wright D."/>
            <person name="Collins J."/>
            <person name="Raisen C."/>
            <person name="Dyer L."/>
            <person name="Leung K."/>
            <person name="Robertson L."/>
            <person name="Ambridge K."/>
            <person name="Leongamornlert D."/>
            <person name="McGuire S."/>
            <person name="Gilderthorp R."/>
            <person name="Griffiths C."/>
            <person name="Manthravadi D."/>
            <person name="Nichol S."/>
            <person name="Barker G."/>
            <person name="Whitehead S."/>
            <person name="Kay M."/>
            <person name="Brown J."/>
            <person name="Murnane C."/>
            <person name="Gray E."/>
            <person name="Humphries M."/>
            <person name="Sycamore N."/>
            <person name="Barker D."/>
            <person name="Saunders D."/>
            <person name="Wallis J."/>
            <person name="Babbage A."/>
            <person name="Hammond S."/>
            <person name="Mashreghi-Mohammadi M."/>
            <person name="Barr L."/>
            <person name="Martin S."/>
            <person name="Wray P."/>
            <person name="Ellington A."/>
            <person name="Matthews N."/>
            <person name="Ellwood M."/>
            <person name="Woodmansey R."/>
            <person name="Clark G."/>
            <person name="Cooper J."/>
            <person name="Tromans A."/>
            <person name="Grafham D."/>
            <person name="Skuce C."/>
            <person name="Pandian R."/>
            <person name="Andrews R."/>
            <person name="Harrison E."/>
            <person name="Kimberley A."/>
            <person name="Garnett J."/>
            <person name="Fosker N."/>
            <person name="Hall R."/>
            <person name="Garner P."/>
            <person name="Kelly D."/>
            <person name="Bird C."/>
            <person name="Palmer S."/>
            <person name="Gehring I."/>
            <person name="Berger A."/>
            <person name="Dooley C.M."/>
            <person name="Ersan-Urun Z."/>
            <person name="Eser C."/>
            <person name="Geiger H."/>
            <person name="Geisler M."/>
            <person name="Karotki L."/>
            <person name="Kirn A."/>
            <person name="Konantz J."/>
            <person name="Konantz M."/>
            <person name="Oberlander M."/>
            <person name="Rudolph-Geiger S."/>
            <person name="Teucke M."/>
            <person name="Lanz C."/>
            <person name="Raddatz G."/>
            <person name="Osoegawa K."/>
            <person name="Zhu B."/>
            <person name="Rapp A."/>
            <person name="Widaa S."/>
            <person name="Langford C."/>
            <person name="Yang F."/>
            <person name="Schuster S.C."/>
            <person name="Carter N.P."/>
            <person name="Harrow J."/>
            <person name="Ning Z."/>
            <person name="Herrero J."/>
            <person name="Searle S.M."/>
            <person name="Enright A."/>
            <person name="Geisler R."/>
            <person name="Plasterk R.H."/>
            <person name="Lee C."/>
            <person name="Westerfield M."/>
            <person name="de Jong P.J."/>
            <person name="Zon L.I."/>
            <person name="Postlethwait J.H."/>
            <person name="Nusslein-Volhard C."/>
            <person name="Hubbard T.J."/>
            <person name="Roest Crollius H."/>
            <person name="Rogers J."/>
            <person name="Stemple D.L."/>
        </authorList>
    </citation>
    <scope>NUCLEOTIDE SEQUENCE [LARGE SCALE GENOMIC DNA]</scope>
    <source>
        <strain evidence="9">Tuebingen</strain>
    </source>
</reference>
<reference evidence="8" key="2">
    <citation type="journal article" date="2014" name="Endocrinology">
        <title>Coevolution of the spexin/galanin/kisspeptin family: Spexin activates galanin receptor type II and III.</title>
        <authorList>
            <person name="Kim D.K."/>
            <person name="Yun S."/>
            <person name="Son G.H."/>
            <person name="Hwang J.I."/>
            <person name="Park C.R."/>
            <person name="Kim J.I."/>
            <person name="Kim K."/>
            <person name="Vaudry H."/>
            <person name="Seong J.Y."/>
        </authorList>
    </citation>
    <scope>FUNCTION</scope>
</reference>
<reference evidence="8" key="3">
    <citation type="journal article" date="2016" name="Neurosci. Lett.">
        <title>Distribution of galanin receptor 2b neurons and interaction with galanin in the zebrafish central nervous system.</title>
        <authorList>
            <person name="Kim E."/>
            <person name="Jeong I."/>
            <person name="Kim S."/>
            <person name="Kim H.K."/>
            <person name="Lee D.W."/>
            <person name="Kim B."/>
            <person name="Seong J.Y."/>
            <person name="Bae Y.K."/>
            <person name="Ryu J.H."/>
            <person name="Park H.C."/>
        </authorList>
    </citation>
    <scope>DEVELOPMENTAL STAGE</scope>
</reference>
<reference evidence="8" key="4">
    <citation type="journal article" date="2019" name="Front. Neural Circuits">
        <title>Overexpression of Spexin 1 in the Dorsal Habenula Reduces Anxiety in Zebrafish.</title>
        <authorList>
            <person name="Jeong I."/>
            <person name="Kim E."/>
            <person name="Seong J.Y."/>
            <person name="Park H.C."/>
        </authorList>
    </citation>
    <scope>FUNCTION</scope>
</reference>
<reference evidence="8" key="5">
    <citation type="journal article" date="2019" name="Sci. Rep.">
        <title>Distribution and neuronal circuit of spexin 1/2 neurons in the zebrafish CNS.</title>
        <authorList>
            <person name="Kim E."/>
            <person name="Jeong I."/>
            <person name="Chung A.Y."/>
            <person name="Kim S."/>
            <person name="Kwon S.H."/>
            <person name="Seong J.Y."/>
            <person name="Park H.C."/>
        </authorList>
    </citation>
    <scope>DEVELOPMENTAL STAGE</scope>
</reference>
<feature type="chain" id="PRO_0000448936" description="Galanin receptor 2a">
    <location>
        <begin position="1"/>
        <end position="363"/>
    </location>
</feature>
<feature type="topological domain" description="Extracellular" evidence="8">
    <location>
        <begin position="1"/>
        <end position="23"/>
    </location>
</feature>
<feature type="transmembrane region" description="Helical; Name=1" evidence="1">
    <location>
        <begin position="24"/>
        <end position="44"/>
    </location>
</feature>
<feature type="topological domain" description="Cytoplasmic" evidence="8">
    <location>
        <begin position="45"/>
        <end position="54"/>
    </location>
</feature>
<feature type="transmembrane region" description="Helical; Name=2" evidence="1">
    <location>
        <begin position="55"/>
        <end position="75"/>
    </location>
</feature>
<feature type="topological domain" description="Extracellular" evidence="8">
    <location>
        <begin position="76"/>
        <end position="94"/>
    </location>
</feature>
<feature type="transmembrane region" description="Helical; Name=3" evidence="1">
    <location>
        <begin position="95"/>
        <end position="115"/>
    </location>
</feature>
<feature type="topological domain" description="Cytoplasmic" evidence="8">
    <location>
        <begin position="116"/>
        <end position="135"/>
    </location>
</feature>
<feature type="transmembrane region" description="Helical; Name=4" evidence="1">
    <location>
        <begin position="136"/>
        <end position="156"/>
    </location>
</feature>
<feature type="topological domain" description="Extracellular" evidence="8">
    <location>
        <begin position="157"/>
        <end position="179"/>
    </location>
</feature>
<feature type="transmembrane region" description="Helical; Name=5" evidence="1">
    <location>
        <begin position="180"/>
        <end position="200"/>
    </location>
</feature>
<feature type="topological domain" description="Cytoplasmic" evidence="8">
    <location>
        <begin position="201"/>
        <end position="230"/>
    </location>
</feature>
<feature type="transmembrane region" description="Helical; Name=6" evidence="1">
    <location>
        <begin position="231"/>
        <end position="251"/>
    </location>
</feature>
<feature type="topological domain" description="Extracellular" evidence="8">
    <location>
        <begin position="252"/>
        <end position="268"/>
    </location>
</feature>
<feature type="transmembrane region" description="Helical; Name=7" evidence="1">
    <location>
        <begin position="269"/>
        <end position="289"/>
    </location>
</feature>
<feature type="topological domain" description="Cytoplasmic" evidence="8">
    <location>
        <begin position="290"/>
        <end position="363"/>
    </location>
</feature>
<feature type="disulfide bond" evidence="2">
    <location>
        <begin position="92"/>
        <end position="169"/>
    </location>
</feature>
<accession>F1R332</accession>
<keyword id="KW-1015">Disulfide bond</keyword>
<keyword id="KW-0297">G-protein coupled receptor</keyword>
<keyword id="KW-0472">Membrane</keyword>
<keyword id="KW-0675">Receptor</keyword>
<keyword id="KW-1185">Reference proteome</keyword>
<keyword id="KW-0807">Transducer</keyword>
<keyword id="KW-0812">Transmembrane</keyword>
<keyword id="KW-1133">Transmembrane helix</keyword>
<comment type="function">
    <text evidence="3 6">Receptor for the hormone galanin (PubMed:24517231). Receptor for the hormones spexin-1 and spexin-2 (PubMed:24517231, PubMed:31474838).</text>
</comment>
<comment type="subcellular location">
    <subcellularLocation>
        <location evidence="1">Membrane</location>
        <topology evidence="1">Multi-pass membrane protein</topology>
    </subcellularLocation>
</comment>
<comment type="tissue specificity">
    <text evidence="5">Expressed in neurons in the ventral area of the interpeduncular nucleus (IPN) where expression often overlaps with spx1.</text>
</comment>
<comment type="developmental stage">
    <text evidence="4">In embryos, expressed at low levels in a restricted area of the brain that includes the subpallium.</text>
</comment>
<comment type="similarity">
    <text evidence="8">Belongs to the G-protein coupled receptor 1 family.</text>
</comment>
<protein>
    <recommendedName>
        <fullName evidence="7">Galanin receptor 2a</fullName>
    </recommendedName>
</protein>
<dbReference type="EMBL" id="AL807798">
    <property type="status" value="NOT_ANNOTATED_CDS"/>
    <property type="molecule type" value="Genomic_DNA"/>
</dbReference>
<dbReference type="EMBL" id="BX510998">
    <property type="status" value="NOT_ANNOTATED_CDS"/>
    <property type="molecule type" value="Genomic_DNA"/>
</dbReference>
<dbReference type="SMR" id="F1R332"/>
<dbReference type="FunCoup" id="F1R332">
    <property type="interactions" value="423"/>
</dbReference>
<dbReference type="STRING" id="7955.ENSDARP00000025567"/>
<dbReference type="PaxDb" id="7955-ENSDARP00000025567"/>
<dbReference type="Ensembl" id="ENSDART00000023857">
    <property type="protein sequence ID" value="ENSDARP00000025567"/>
    <property type="gene ID" value="ENSDARG00000020853"/>
</dbReference>
<dbReference type="Ensembl" id="ENSDART00000189972">
    <property type="protein sequence ID" value="ENSDARP00000150425"/>
    <property type="gene ID" value="ENSDARG00000113968"/>
</dbReference>
<dbReference type="AGR" id="ZFIN:ZDB-GENE-130603-37"/>
<dbReference type="ZFIN" id="ZDB-GENE-130603-37">
    <property type="gene designation" value="galr2a"/>
</dbReference>
<dbReference type="eggNOG" id="KOG3656">
    <property type="taxonomic scope" value="Eukaryota"/>
</dbReference>
<dbReference type="HOGENOM" id="CLU_009579_6_4_1"/>
<dbReference type="InParanoid" id="F1R332"/>
<dbReference type="OMA" id="LTYTRTI"/>
<dbReference type="OrthoDB" id="5964776at2759"/>
<dbReference type="TreeFam" id="TF315737"/>
<dbReference type="Reactome" id="R-DRE-375276">
    <property type="pathway name" value="Peptide ligand-binding receptors"/>
</dbReference>
<dbReference type="Reactome" id="R-DRE-418594">
    <property type="pathway name" value="G alpha (i) signalling events"/>
</dbReference>
<dbReference type="PRO" id="PR:F1R332"/>
<dbReference type="Proteomes" id="UP000000437">
    <property type="component" value="Unplaced"/>
</dbReference>
<dbReference type="Bgee" id="ENSDARG00000020853">
    <property type="expression patterns" value="Expressed in testis"/>
</dbReference>
<dbReference type="GO" id="GO:0005886">
    <property type="term" value="C:plasma membrane"/>
    <property type="evidence" value="ECO:0000318"/>
    <property type="project" value="GO_Central"/>
</dbReference>
<dbReference type="GO" id="GO:0008528">
    <property type="term" value="F:G protein-coupled peptide receptor activity"/>
    <property type="evidence" value="ECO:0000318"/>
    <property type="project" value="GO_Central"/>
</dbReference>
<dbReference type="GO" id="GO:0004966">
    <property type="term" value="F:galanin receptor activity"/>
    <property type="evidence" value="ECO:0000314"/>
    <property type="project" value="ZFIN"/>
</dbReference>
<dbReference type="GO" id="GO:0007218">
    <property type="term" value="P:neuropeptide signaling pathway"/>
    <property type="evidence" value="ECO:0000318"/>
    <property type="project" value="GO_Central"/>
</dbReference>
<dbReference type="CDD" id="cd15097">
    <property type="entry name" value="7tmA_Gal2_Gal3_R"/>
    <property type="match status" value="1"/>
</dbReference>
<dbReference type="FunFam" id="1.20.1070.10:FF:000092">
    <property type="entry name" value="Galanin receptor type 2"/>
    <property type="match status" value="1"/>
</dbReference>
<dbReference type="Gene3D" id="1.20.1070.10">
    <property type="entry name" value="Rhodopsin 7-helix transmembrane proteins"/>
    <property type="match status" value="1"/>
</dbReference>
<dbReference type="InterPro" id="IPR000405">
    <property type="entry name" value="Galanin_rcpt"/>
</dbReference>
<dbReference type="InterPro" id="IPR000276">
    <property type="entry name" value="GPCR_Rhodpsn"/>
</dbReference>
<dbReference type="InterPro" id="IPR017452">
    <property type="entry name" value="GPCR_Rhodpsn_7TM"/>
</dbReference>
<dbReference type="PANTHER" id="PTHR45695:SF35">
    <property type="entry name" value="GALANIN RECEPTOR TYPE 2-LIKE ISOFORM X2"/>
    <property type="match status" value="1"/>
</dbReference>
<dbReference type="PANTHER" id="PTHR45695">
    <property type="entry name" value="LEUCOKININ RECEPTOR-RELATED"/>
    <property type="match status" value="1"/>
</dbReference>
<dbReference type="Pfam" id="PF00001">
    <property type="entry name" value="7tm_1"/>
    <property type="match status" value="1"/>
</dbReference>
<dbReference type="PRINTS" id="PR00663">
    <property type="entry name" value="GALANINR"/>
</dbReference>
<dbReference type="PRINTS" id="PR00237">
    <property type="entry name" value="GPCRRHODOPSN"/>
</dbReference>
<dbReference type="SMART" id="SM01381">
    <property type="entry name" value="7TM_GPCR_Srsx"/>
    <property type="match status" value="1"/>
</dbReference>
<dbReference type="SUPFAM" id="SSF81321">
    <property type="entry name" value="Family A G protein-coupled receptor-like"/>
    <property type="match status" value="1"/>
</dbReference>
<dbReference type="PROSITE" id="PS00237">
    <property type="entry name" value="G_PROTEIN_RECEP_F1_1"/>
    <property type="match status" value="1"/>
</dbReference>
<dbReference type="PROSITE" id="PS50262">
    <property type="entry name" value="G_PROTEIN_RECEP_F1_2"/>
    <property type="match status" value="1"/>
</dbReference>
<gene>
    <name evidence="7 10" type="primary">galr2a</name>
</gene>
<name>GAL2A_DANRE</name>
<proteinExistence type="evidence at transcript level"/>